<reference key="1">
    <citation type="journal article" date="2008" name="Genome Res.">
        <title>Genome sequence of the beta-rhizobium Cupriavidus taiwanensis and comparative genomics of rhizobia.</title>
        <authorList>
            <person name="Amadou C."/>
            <person name="Pascal G."/>
            <person name="Mangenot S."/>
            <person name="Glew M."/>
            <person name="Bontemps C."/>
            <person name="Capela D."/>
            <person name="Carrere S."/>
            <person name="Cruveiller S."/>
            <person name="Dossat C."/>
            <person name="Lajus A."/>
            <person name="Marchetti M."/>
            <person name="Poinsot V."/>
            <person name="Rouy Z."/>
            <person name="Servin B."/>
            <person name="Saad M."/>
            <person name="Schenowitz C."/>
            <person name="Barbe V."/>
            <person name="Batut J."/>
            <person name="Medigue C."/>
            <person name="Masson-Boivin C."/>
        </authorList>
    </citation>
    <scope>NUCLEOTIDE SEQUENCE [LARGE SCALE GENOMIC DNA]</scope>
    <source>
        <strain>DSM 17343 / BCRC 17206 / CCUG 44338 / CIP 107171 / LMG 19424 / R1</strain>
    </source>
</reference>
<accession>B3R7S0</accession>
<feature type="chain" id="PRO_1000141533" description="Large ribosomal subunit protein uL2">
    <location>
        <begin position="1"/>
        <end position="276"/>
    </location>
</feature>
<feature type="region of interest" description="Disordered" evidence="2">
    <location>
        <begin position="225"/>
        <end position="276"/>
    </location>
</feature>
<comment type="function">
    <text evidence="1">One of the primary rRNA binding proteins. Required for association of the 30S and 50S subunits to form the 70S ribosome, for tRNA binding and peptide bond formation. It has been suggested to have peptidyltransferase activity; this is somewhat controversial. Makes several contacts with the 16S rRNA in the 70S ribosome.</text>
</comment>
<comment type="subunit">
    <text evidence="1">Part of the 50S ribosomal subunit. Forms a bridge to the 30S subunit in the 70S ribosome.</text>
</comment>
<comment type="similarity">
    <text evidence="1">Belongs to the universal ribosomal protein uL2 family.</text>
</comment>
<dbReference type="EMBL" id="CU633749">
    <property type="protein sequence ID" value="CAQ70865.1"/>
    <property type="molecule type" value="Genomic_DNA"/>
</dbReference>
<dbReference type="RefSeq" id="WP_012354139.1">
    <property type="nucleotide sequence ID" value="NC_010528.1"/>
</dbReference>
<dbReference type="SMR" id="B3R7S0"/>
<dbReference type="GeneID" id="29761876"/>
<dbReference type="KEGG" id="cti:RALTA_A2941"/>
<dbReference type="eggNOG" id="COG0090">
    <property type="taxonomic scope" value="Bacteria"/>
</dbReference>
<dbReference type="HOGENOM" id="CLU_036235_2_1_4"/>
<dbReference type="BioCyc" id="CTAI977880:RALTA_RS14340-MONOMER"/>
<dbReference type="Proteomes" id="UP000001692">
    <property type="component" value="Chromosome 1"/>
</dbReference>
<dbReference type="GO" id="GO:0015934">
    <property type="term" value="C:large ribosomal subunit"/>
    <property type="evidence" value="ECO:0007669"/>
    <property type="project" value="InterPro"/>
</dbReference>
<dbReference type="GO" id="GO:0019843">
    <property type="term" value="F:rRNA binding"/>
    <property type="evidence" value="ECO:0007669"/>
    <property type="project" value="UniProtKB-UniRule"/>
</dbReference>
<dbReference type="GO" id="GO:0003735">
    <property type="term" value="F:structural constituent of ribosome"/>
    <property type="evidence" value="ECO:0007669"/>
    <property type="project" value="InterPro"/>
</dbReference>
<dbReference type="GO" id="GO:0016740">
    <property type="term" value="F:transferase activity"/>
    <property type="evidence" value="ECO:0007669"/>
    <property type="project" value="InterPro"/>
</dbReference>
<dbReference type="GO" id="GO:0002181">
    <property type="term" value="P:cytoplasmic translation"/>
    <property type="evidence" value="ECO:0007669"/>
    <property type="project" value="TreeGrafter"/>
</dbReference>
<dbReference type="FunFam" id="2.30.30.30:FF:000001">
    <property type="entry name" value="50S ribosomal protein L2"/>
    <property type="match status" value="1"/>
</dbReference>
<dbReference type="FunFam" id="2.40.50.140:FF:000003">
    <property type="entry name" value="50S ribosomal protein L2"/>
    <property type="match status" value="1"/>
</dbReference>
<dbReference type="FunFam" id="4.10.950.10:FF:000001">
    <property type="entry name" value="50S ribosomal protein L2"/>
    <property type="match status" value="1"/>
</dbReference>
<dbReference type="Gene3D" id="2.30.30.30">
    <property type="match status" value="1"/>
</dbReference>
<dbReference type="Gene3D" id="2.40.50.140">
    <property type="entry name" value="Nucleic acid-binding proteins"/>
    <property type="match status" value="1"/>
</dbReference>
<dbReference type="Gene3D" id="4.10.950.10">
    <property type="entry name" value="Ribosomal protein L2, domain 3"/>
    <property type="match status" value="1"/>
</dbReference>
<dbReference type="HAMAP" id="MF_01320_B">
    <property type="entry name" value="Ribosomal_uL2_B"/>
    <property type="match status" value="1"/>
</dbReference>
<dbReference type="InterPro" id="IPR012340">
    <property type="entry name" value="NA-bd_OB-fold"/>
</dbReference>
<dbReference type="InterPro" id="IPR014722">
    <property type="entry name" value="Rib_uL2_dom2"/>
</dbReference>
<dbReference type="InterPro" id="IPR002171">
    <property type="entry name" value="Ribosomal_uL2"/>
</dbReference>
<dbReference type="InterPro" id="IPR005880">
    <property type="entry name" value="Ribosomal_uL2_bac/org-type"/>
</dbReference>
<dbReference type="InterPro" id="IPR022669">
    <property type="entry name" value="Ribosomal_uL2_C"/>
</dbReference>
<dbReference type="InterPro" id="IPR022671">
    <property type="entry name" value="Ribosomal_uL2_CS"/>
</dbReference>
<dbReference type="InterPro" id="IPR014726">
    <property type="entry name" value="Ribosomal_uL2_dom3"/>
</dbReference>
<dbReference type="InterPro" id="IPR022666">
    <property type="entry name" value="Ribosomal_uL2_RNA-bd_dom"/>
</dbReference>
<dbReference type="InterPro" id="IPR008991">
    <property type="entry name" value="Translation_prot_SH3-like_sf"/>
</dbReference>
<dbReference type="NCBIfam" id="TIGR01171">
    <property type="entry name" value="rplB_bact"/>
    <property type="match status" value="1"/>
</dbReference>
<dbReference type="PANTHER" id="PTHR13691:SF5">
    <property type="entry name" value="LARGE RIBOSOMAL SUBUNIT PROTEIN UL2M"/>
    <property type="match status" value="1"/>
</dbReference>
<dbReference type="PANTHER" id="PTHR13691">
    <property type="entry name" value="RIBOSOMAL PROTEIN L2"/>
    <property type="match status" value="1"/>
</dbReference>
<dbReference type="Pfam" id="PF00181">
    <property type="entry name" value="Ribosomal_L2"/>
    <property type="match status" value="1"/>
</dbReference>
<dbReference type="Pfam" id="PF03947">
    <property type="entry name" value="Ribosomal_L2_C"/>
    <property type="match status" value="1"/>
</dbReference>
<dbReference type="PIRSF" id="PIRSF002158">
    <property type="entry name" value="Ribosomal_L2"/>
    <property type="match status" value="1"/>
</dbReference>
<dbReference type="SMART" id="SM01383">
    <property type="entry name" value="Ribosomal_L2"/>
    <property type="match status" value="1"/>
</dbReference>
<dbReference type="SMART" id="SM01382">
    <property type="entry name" value="Ribosomal_L2_C"/>
    <property type="match status" value="1"/>
</dbReference>
<dbReference type="SUPFAM" id="SSF50249">
    <property type="entry name" value="Nucleic acid-binding proteins"/>
    <property type="match status" value="1"/>
</dbReference>
<dbReference type="SUPFAM" id="SSF50104">
    <property type="entry name" value="Translation proteins SH3-like domain"/>
    <property type="match status" value="1"/>
</dbReference>
<dbReference type="PROSITE" id="PS00467">
    <property type="entry name" value="RIBOSOMAL_L2"/>
    <property type="match status" value="1"/>
</dbReference>
<protein>
    <recommendedName>
        <fullName evidence="1">Large ribosomal subunit protein uL2</fullName>
    </recommendedName>
    <alternativeName>
        <fullName evidence="3">50S ribosomal protein L2</fullName>
    </alternativeName>
</protein>
<gene>
    <name evidence="1" type="primary">rplB</name>
    <name type="ordered locus">RALTA_A2941</name>
</gene>
<name>RL2_CUPTR</name>
<proteinExistence type="inferred from homology"/>
<organism>
    <name type="scientific">Cupriavidus taiwanensis (strain DSM 17343 / BCRC 17206 / CCUG 44338 / CIP 107171 / LMG 19424 / R1)</name>
    <name type="common">Ralstonia taiwanensis (strain LMG 19424)</name>
    <dbReference type="NCBI Taxonomy" id="977880"/>
    <lineage>
        <taxon>Bacteria</taxon>
        <taxon>Pseudomonadati</taxon>
        <taxon>Pseudomonadota</taxon>
        <taxon>Betaproteobacteria</taxon>
        <taxon>Burkholderiales</taxon>
        <taxon>Burkholderiaceae</taxon>
        <taxon>Cupriavidus</taxon>
    </lineage>
</organism>
<sequence length="276" mass="30204">MALVKTKPTSPGRRSMVKVVNKDLHKGTPYAPLLEKQFQKSGRNNNGHITTRHKGGGHKHHYRVVDFKRNDKDGIPAKVERLEYDPNRSANIALVVFADGERRYIIATKGMVAGQQLLNGSEAPIKAGNNLPIRNIPVGTTINNVEMLPGKGAQIARAAGGSAVLLAREGLYAQVRLRSGEVRRVHIECRATVGEVGNEEHSLRVIGKAGATRWRGIRPTVRGVVMNPVDHPHGGGEGKTAAGRDPVSPWGTPTKGYRTRSNKRTDSMIVQKRHKR</sequence>
<evidence type="ECO:0000255" key="1">
    <source>
        <dbReference type="HAMAP-Rule" id="MF_01320"/>
    </source>
</evidence>
<evidence type="ECO:0000256" key="2">
    <source>
        <dbReference type="SAM" id="MobiDB-lite"/>
    </source>
</evidence>
<evidence type="ECO:0000305" key="3"/>
<keyword id="KW-0687">Ribonucleoprotein</keyword>
<keyword id="KW-0689">Ribosomal protein</keyword>
<keyword id="KW-0694">RNA-binding</keyword>
<keyword id="KW-0699">rRNA-binding</keyword>